<sequence>MSKFIVIEGLEGAGKSSAVRYVADYLHGHGVARIECTREPGGTPLAERMRAIVKEVHDERLTIEAELLLMYASRVQLVETRIKPALADGIWVVGDRHDLSSQAYQGGGRGIDANLIGAIKRAVLGDFKPDLTLYLDIDPAIGLQRARHRGELDRIELEQLSFFERTRQRYLELAAADESIKVIDAGQAPEQVKAAIEAALAHYLKDEPSCIPG</sequence>
<dbReference type="EC" id="2.7.4.9" evidence="1"/>
<dbReference type="EMBL" id="CP000462">
    <property type="protein sequence ID" value="ABK39663.1"/>
    <property type="molecule type" value="Genomic_DNA"/>
</dbReference>
<dbReference type="RefSeq" id="WP_011706110.1">
    <property type="nucleotide sequence ID" value="NC_008570.1"/>
</dbReference>
<dbReference type="RefSeq" id="YP_856780.1">
    <property type="nucleotide sequence ID" value="NC_008570.1"/>
</dbReference>
<dbReference type="SMR" id="A0KKH9"/>
<dbReference type="STRING" id="380703.AHA_2256"/>
<dbReference type="EnsemblBacteria" id="ABK39663">
    <property type="protein sequence ID" value="ABK39663"/>
    <property type="gene ID" value="AHA_2256"/>
</dbReference>
<dbReference type="GeneID" id="4488723"/>
<dbReference type="KEGG" id="aha:AHA_2256"/>
<dbReference type="PATRIC" id="fig|380703.7.peg.2256"/>
<dbReference type="eggNOG" id="COG0125">
    <property type="taxonomic scope" value="Bacteria"/>
</dbReference>
<dbReference type="HOGENOM" id="CLU_049131_0_1_6"/>
<dbReference type="OrthoDB" id="9774907at2"/>
<dbReference type="Proteomes" id="UP000000756">
    <property type="component" value="Chromosome"/>
</dbReference>
<dbReference type="GO" id="GO:0005829">
    <property type="term" value="C:cytosol"/>
    <property type="evidence" value="ECO:0007669"/>
    <property type="project" value="TreeGrafter"/>
</dbReference>
<dbReference type="GO" id="GO:0005524">
    <property type="term" value="F:ATP binding"/>
    <property type="evidence" value="ECO:0007669"/>
    <property type="project" value="UniProtKB-UniRule"/>
</dbReference>
<dbReference type="GO" id="GO:0004798">
    <property type="term" value="F:dTMP kinase activity"/>
    <property type="evidence" value="ECO:0007669"/>
    <property type="project" value="UniProtKB-UniRule"/>
</dbReference>
<dbReference type="GO" id="GO:0006233">
    <property type="term" value="P:dTDP biosynthetic process"/>
    <property type="evidence" value="ECO:0007669"/>
    <property type="project" value="InterPro"/>
</dbReference>
<dbReference type="GO" id="GO:0006235">
    <property type="term" value="P:dTTP biosynthetic process"/>
    <property type="evidence" value="ECO:0007669"/>
    <property type="project" value="UniProtKB-UniRule"/>
</dbReference>
<dbReference type="GO" id="GO:0006227">
    <property type="term" value="P:dUDP biosynthetic process"/>
    <property type="evidence" value="ECO:0007669"/>
    <property type="project" value="TreeGrafter"/>
</dbReference>
<dbReference type="CDD" id="cd01672">
    <property type="entry name" value="TMPK"/>
    <property type="match status" value="1"/>
</dbReference>
<dbReference type="FunFam" id="3.40.50.300:FF:000321">
    <property type="entry name" value="Thymidylate kinase"/>
    <property type="match status" value="1"/>
</dbReference>
<dbReference type="Gene3D" id="3.40.50.300">
    <property type="entry name" value="P-loop containing nucleotide triphosphate hydrolases"/>
    <property type="match status" value="1"/>
</dbReference>
<dbReference type="HAMAP" id="MF_00165">
    <property type="entry name" value="Thymidylate_kinase"/>
    <property type="match status" value="1"/>
</dbReference>
<dbReference type="InterPro" id="IPR027417">
    <property type="entry name" value="P-loop_NTPase"/>
</dbReference>
<dbReference type="InterPro" id="IPR039430">
    <property type="entry name" value="Thymidylate_kin-like_dom"/>
</dbReference>
<dbReference type="InterPro" id="IPR018095">
    <property type="entry name" value="Thymidylate_kin_CS"/>
</dbReference>
<dbReference type="InterPro" id="IPR018094">
    <property type="entry name" value="Thymidylate_kinase"/>
</dbReference>
<dbReference type="NCBIfam" id="TIGR00041">
    <property type="entry name" value="DTMP_kinase"/>
    <property type="match status" value="1"/>
</dbReference>
<dbReference type="PANTHER" id="PTHR10344">
    <property type="entry name" value="THYMIDYLATE KINASE"/>
    <property type="match status" value="1"/>
</dbReference>
<dbReference type="PANTHER" id="PTHR10344:SF4">
    <property type="entry name" value="UMP-CMP KINASE 2, MITOCHONDRIAL"/>
    <property type="match status" value="1"/>
</dbReference>
<dbReference type="Pfam" id="PF02223">
    <property type="entry name" value="Thymidylate_kin"/>
    <property type="match status" value="1"/>
</dbReference>
<dbReference type="SUPFAM" id="SSF52540">
    <property type="entry name" value="P-loop containing nucleoside triphosphate hydrolases"/>
    <property type="match status" value="1"/>
</dbReference>
<dbReference type="PROSITE" id="PS01331">
    <property type="entry name" value="THYMIDYLATE_KINASE"/>
    <property type="match status" value="1"/>
</dbReference>
<reference key="1">
    <citation type="journal article" date="2006" name="J. Bacteriol.">
        <title>Genome sequence of Aeromonas hydrophila ATCC 7966T: jack of all trades.</title>
        <authorList>
            <person name="Seshadri R."/>
            <person name="Joseph S.W."/>
            <person name="Chopra A.K."/>
            <person name="Sha J."/>
            <person name="Shaw J."/>
            <person name="Graf J."/>
            <person name="Haft D.H."/>
            <person name="Wu M."/>
            <person name="Ren Q."/>
            <person name="Rosovitz M.J."/>
            <person name="Madupu R."/>
            <person name="Tallon L."/>
            <person name="Kim M."/>
            <person name="Jin S."/>
            <person name="Vuong H."/>
            <person name="Stine O.C."/>
            <person name="Ali A."/>
            <person name="Horneman A.J."/>
            <person name="Heidelberg J.F."/>
        </authorList>
    </citation>
    <scope>NUCLEOTIDE SEQUENCE [LARGE SCALE GENOMIC DNA]</scope>
    <source>
        <strain>ATCC 7966 / DSM 30187 / BCRC 13018 / CCUG 14551 / JCM 1027 / KCTC 2358 / NCIMB 9240 / NCTC 8049</strain>
    </source>
</reference>
<organism>
    <name type="scientific">Aeromonas hydrophila subsp. hydrophila (strain ATCC 7966 / DSM 30187 / BCRC 13018 / CCUG 14551 / JCM 1027 / KCTC 2358 / NCIMB 9240 / NCTC 8049)</name>
    <dbReference type="NCBI Taxonomy" id="380703"/>
    <lineage>
        <taxon>Bacteria</taxon>
        <taxon>Pseudomonadati</taxon>
        <taxon>Pseudomonadota</taxon>
        <taxon>Gammaproteobacteria</taxon>
        <taxon>Aeromonadales</taxon>
        <taxon>Aeromonadaceae</taxon>
        <taxon>Aeromonas</taxon>
    </lineage>
</organism>
<protein>
    <recommendedName>
        <fullName evidence="1">Thymidylate kinase</fullName>
        <ecNumber evidence="1">2.7.4.9</ecNumber>
    </recommendedName>
    <alternativeName>
        <fullName evidence="1">dTMP kinase</fullName>
    </alternativeName>
</protein>
<gene>
    <name evidence="1" type="primary">tmk</name>
    <name type="ordered locus">AHA_2256</name>
</gene>
<feature type="chain" id="PRO_1000123551" description="Thymidylate kinase">
    <location>
        <begin position="1"/>
        <end position="213"/>
    </location>
</feature>
<feature type="binding site" evidence="1">
    <location>
        <begin position="9"/>
        <end position="16"/>
    </location>
    <ligand>
        <name>ATP</name>
        <dbReference type="ChEBI" id="CHEBI:30616"/>
    </ligand>
</feature>
<proteinExistence type="inferred from homology"/>
<name>KTHY_AERHH</name>
<keyword id="KW-0067">ATP-binding</keyword>
<keyword id="KW-0418">Kinase</keyword>
<keyword id="KW-0545">Nucleotide biosynthesis</keyword>
<keyword id="KW-0547">Nucleotide-binding</keyword>
<keyword id="KW-1185">Reference proteome</keyword>
<keyword id="KW-0808">Transferase</keyword>
<comment type="function">
    <text evidence="1">Phosphorylation of dTMP to form dTDP in both de novo and salvage pathways of dTTP synthesis.</text>
</comment>
<comment type="catalytic activity">
    <reaction evidence="1">
        <text>dTMP + ATP = dTDP + ADP</text>
        <dbReference type="Rhea" id="RHEA:13517"/>
        <dbReference type="ChEBI" id="CHEBI:30616"/>
        <dbReference type="ChEBI" id="CHEBI:58369"/>
        <dbReference type="ChEBI" id="CHEBI:63528"/>
        <dbReference type="ChEBI" id="CHEBI:456216"/>
        <dbReference type="EC" id="2.7.4.9"/>
    </reaction>
</comment>
<comment type="similarity">
    <text evidence="1">Belongs to the thymidylate kinase family.</text>
</comment>
<accession>A0KKH9</accession>
<evidence type="ECO:0000255" key="1">
    <source>
        <dbReference type="HAMAP-Rule" id="MF_00165"/>
    </source>
</evidence>